<feature type="chain" id="PRO_0000095678" description="Glucokinase">
    <location>
        <begin position="1"/>
        <end position="317"/>
    </location>
</feature>
<protein>
    <recommendedName>
        <fullName>Glucokinase</fullName>
        <ecNumber>2.7.1.2</ecNumber>
    </recommendedName>
    <alternativeName>
        <fullName>Glucose kinase</fullName>
    </alternativeName>
</protein>
<evidence type="ECO:0000305" key="1"/>
<name>GLK_STRLI</name>
<sequence length="317" mass="33062">MGLTIGVDIGGTKIAAGVVDEEGNILSTHKVPTPTTPEAIVDAIASAVEGARVGHEIVAVGIGAAGYVNRQRSTVYFAPNIDWRQEPLKEKVEARVGLPVVVENDANAAAWGEYKFGGGKGHRNVICITLGTGLGGGIIIGNKLRRGHFGVAAEFGHIRMVPDGLLCGCGSQGCWEQYASGRALVRYAKQRANATPERAEVLLALGDGTPDGIEGKHISVAARQGCPVAVDSYRELARWAGAGLADLASLFDPSAFIVGGGLSDEGDLVLDPIRKSYKRWLVGGNWRPVADVIAAQLGNKAGLVGAADLAREPDPIM</sequence>
<reference key="1">
    <citation type="journal article" date="2000" name="Antonie Van Leeuwenhoek">
        <title>Glucose kinase of Streptomyces coelicolor A3(2): large-scale purification and biochemical analysis.</title>
        <authorList>
            <person name="Mahr K."/>
            <person name="van Wezel G.P."/>
            <person name="Svensson C."/>
            <person name="Krengel U."/>
            <person name="Bibb M.J."/>
            <person name="Titgemeyer F."/>
        </authorList>
    </citation>
    <scope>NUCLEOTIDE SEQUENCE [GENOMIC DNA]</scope>
    <scope>CHARACTERIZATION</scope>
    <source>
        <strain>TK24</strain>
    </source>
</reference>
<accession>P0A4E2</accession>
<accession>P40184</accession>
<gene>
    <name type="primary">glkA</name>
    <name type="synonym">glk</name>
</gene>
<organism>
    <name type="scientific">Streptomyces lividans</name>
    <dbReference type="NCBI Taxonomy" id="1916"/>
    <lineage>
        <taxon>Bacteria</taxon>
        <taxon>Bacillati</taxon>
        <taxon>Actinomycetota</taxon>
        <taxon>Actinomycetes</taxon>
        <taxon>Kitasatosporales</taxon>
        <taxon>Streptomycetaceae</taxon>
        <taxon>Streptomyces</taxon>
    </lineage>
</organism>
<dbReference type="EC" id="2.7.1.2"/>
<dbReference type="EMBL" id="AF228048">
    <property type="protein sequence ID" value="AAF42869.1"/>
    <property type="molecule type" value="Genomic_DNA"/>
</dbReference>
<dbReference type="SMR" id="P0A4E2"/>
<dbReference type="GO" id="GO:0005737">
    <property type="term" value="C:cytoplasm"/>
    <property type="evidence" value="ECO:0007669"/>
    <property type="project" value="UniProtKB-SubCell"/>
</dbReference>
<dbReference type="GO" id="GO:0005524">
    <property type="term" value="F:ATP binding"/>
    <property type="evidence" value="ECO:0007669"/>
    <property type="project" value="UniProtKB-KW"/>
</dbReference>
<dbReference type="GO" id="GO:0004340">
    <property type="term" value="F:glucokinase activity"/>
    <property type="evidence" value="ECO:0007669"/>
    <property type="project" value="UniProtKB-EC"/>
</dbReference>
<dbReference type="GO" id="GO:0006096">
    <property type="term" value="P:glycolytic process"/>
    <property type="evidence" value="ECO:0007669"/>
    <property type="project" value="UniProtKB-KW"/>
</dbReference>
<dbReference type="CDD" id="cd24061">
    <property type="entry name" value="ASKHA_NBD_ROK_SgGLK-like"/>
    <property type="match status" value="1"/>
</dbReference>
<dbReference type="FunFam" id="3.30.420.40:FF:000055">
    <property type="entry name" value="Glucokinase"/>
    <property type="match status" value="1"/>
</dbReference>
<dbReference type="Gene3D" id="3.30.420.40">
    <property type="match status" value="2"/>
</dbReference>
<dbReference type="InterPro" id="IPR043129">
    <property type="entry name" value="ATPase_NBD"/>
</dbReference>
<dbReference type="InterPro" id="IPR000600">
    <property type="entry name" value="ROK"/>
</dbReference>
<dbReference type="InterPro" id="IPR049874">
    <property type="entry name" value="ROK_cs"/>
</dbReference>
<dbReference type="InterPro" id="IPR004654">
    <property type="entry name" value="ROK_glcA"/>
</dbReference>
<dbReference type="NCBIfam" id="TIGR00744">
    <property type="entry name" value="ROK_glcA_fam"/>
    <property type="match status" value="1"/>
</dbReference>
<dbReference type="PANTHER" id="PTHR18964:SF173">
    <property type="entry name" value="GLUCOKINASE"/>
    <property type="match status" value="1"/>
</dbReference>
<dbReference type="PANTHER" id="PTHR18964">
    <property type="entry name" value="ROK (REPRESSOR, ORF, KINASE) FAMILY"/>
    <property type="match status" value="1"/>
</dbReference>
<dbReference type="Pfam" id="PF00480">
    <property type="entry name" value="ROK"/>
    <property type="match status" value="1"/>
</dbReference>
<dbReference type="SUPFAM" id="SSF53067">
    <property type="entry name" value="Actin-like ATPase domain"/>
    <property type="match status" value="1"/>
</dbReference>
<dbReference type="PROSITE" id="PS01125">
    <property type="entry name" value="ROK"/>
    <property type="match status" value="1"/>
</dbReference>
<keyword id="KW-0067">ATP-binding</keyword>
<keyword id="KW-0963">Cytoplasm</keyword>
<keyword id="KW-0324">Glycolysis</keyword>
<keyword id="KW-0418">Kinase</keyword>
<keyword id="KW-0547">Nucleotide-binding</keyword>
<keyword id="KW-0678">Repressor</keyword>
<keyword id="KW-0808">Transferase</keyword>
<comment type="function">
    <text>Required for glucose repression of many different genes.</text>
</comment>
<comment type="catalytic activity">
    <reaction>
        <text>D-glucose + ATP = D-glucose 6-phosphate + ADP + H(+)</text>
        <dbReference type="Rhea" id="RHEA:17825"/>
        <dbReference type="ChEBI" id="CHEBI:4167"/>
        <dbReference type="ChEBI" id="CHEBI:15378"/>
        <dbReference type="ChEBI" id="CHEBI:30616"/>
        <dbReference type="ChEBI" id="CHEBI:61548"/>
        <dbReference type="ChEBI" id="CHEBI:456216"/>
        <dbReference type="EC" id="2.7.1.2"/>
    </reaction>
</comment>
<comment type="subunit">
    <text>Homooligomer (possibly a homotetramer). Alternatively, it may form a heterotetramer of two glucokinase subunits with two ORF2 (AC P40182) proteins.</text>
</comment>
<comment type="subcellular location">
    <subcellularLocation>
        <location>Cytoplasm</location>
    </subcellularLocation>
</comment>
<comment type="similarity">
    <text evidence="1">Belongs to the ROK (NagC/XylR) family.</text>
</comment>
<proteinExistence type="evidence at protein level"/>